<reference key="1">
    <citation type="journal article" date="1999" name="Nature">
        <title>Sequence and analysis of chromosome 4 of the plant Arabidopsis thaliana.</title>
        <authorList>
            <person name="Mayer K.F.X."/>
            <person name="Schueller C."/>
            <person name="Wambutt R."/>
            <person name="Murphy G."/>
            <person name="Volckaert G."/>
            <person name="Pohl T."/>
            <person name="Duesterhoeft A."/>
            <person name="Stiekema W."/>
            <person name="Entian K.-D."/>
            <person name="Terryn N."/>
            <person name="Harris B."/>
            <person name="Ansorge W."/>
            <person name="Brandt P."/>
            <person name="Grivell L.A."/>
            <person name="Rieger M."/>
            <person name="Weichselgartner M."/>
            <person name="de Simone V."/>
            <person name="Obermaier B."/>
            <person name="Mache R."/>
            <person name="Mueller M."/>
            <person name="Kreis M."/>
            <person name="Delseny M."/>
            <person name="Puigdomenech P."/>
            <person name="Watson M."/>
            <person name="Schmidtheini T."/>
            <person name="Reichert B."/>
            <person name="Portetelle D."/>
            <person name="Perez-Alonso M."/>
            <person name="Boutry M."/>
            <person name="Bancroft I."/>
            <person name="Vos P."/>
            <person name="Hoheisel J."/>
            <person name="Zimmermann W."/>
            <person name="Wedler H."/>
            <person name="Ridley P."/>
            <person name="Langham S.-A."/>
            <person name="McCullagh B."/>
            <person name="Bilham L."/>
            <person name="Robben J."/>
            <person name="van der Schueren J."/>
            <person name="Grymonprez B."/>
            <person name="Chuang Y.-J."/>
            <person name="Vandenbussche F."/>
            <person name="Braeken M."/>
            <person name="Weltjens I."/>
            <person name="Voet M."/>
            <person name="Bastiaens I."/>
            <person name="Aert R."/>
            <person name="Defoor E."/>
            <person name="Weitzenegger T."/>
            <person name="Bothe G."/>
            <person name="Ramsperger U."/>
            <person name="Hilbert H."/>
            <person name="Braun M."/>
            <person name="Holzer E."/>
            <person name="Brandt A."/>
            <person name="Peters S."/>
            <person name="van Staveren M."/>
            <person name="Dirkse W."/>
            <person name="Mooijman P."/>
            <person name="Klein Lankhorst R."/>
            <person name="Rose M."/>
            <person name="Hauf J."/>
            <person name="Koetter P."/>
            <person name="Berneiser S."/>
            <person name="Hempel S."/>
            <person name="Feldpausch M."/>
            <person name="Lamberth S."/>
            <person name="Van den Daele H."/>
            <person name="De Keyser A."/>
            <person name="Buysshaert C."/>
            <person name="Gielen J."/>
            <person name="Villarroel R."/>
            <person name="De Clercq R."/>
            <person name="van Montagu M."/>
            <person name="Rogers J."/>
            <person name="Cronin A."/>
            <person name="Quail M.A."/>
            <person name="Bray-Allen S."/>
            <person name="Clark L."/>
            <person name="Doggett J."/>
            <person name="Hall S."/>
            <person name="Kay M."/>
            <person name="Lennard N."/>
            <person name="McLay K."/>
            <person name="Mayes R."/>
            <person name="Pettett A."/>
            <person name="Rajandream M.A."/>
            <person name="Lyne M."/>
            <person name="Benes V."/>
            <person name="Rechmann S."/>
            <person name="Borkova D."/>
            <person name="Bloecker H."/>
            <person name="Scharfe M."/>
            <person name="Grimm M."/>
            <person name="Loehnert T.-H."/>
            <person name="Dose S."/>
            <person name="de Haan M."/>
            <person name="Maarse A.C."/>
            <person name="Schaefer M."/>
            <person name="Mueller-Auer S."/>
            <person name="Gabel C."/>
            <person name="Fuchs M."/>
            <person name="Fartmann B."/>
            <person name="Granderath K."/>
            <person name="Dauner D."/>
            <person name="Herzl A."/>
            <person name="Neumann S."/>
            <person name="Argiriou A."/>
            <person name="Vitale D."/>
            <person name="Liguori R."/>
            <person name="Piravandi E."/>
            <person name="Massenet O."/>
            <person name="Quigley F."/>
            <person name="Clabauld G."/>
            <person name="Muendlein A."/>
            <person name="Felber R."/>
            <person name="Schnabl S."/>
            <person name="Hiller R."/>
            <person name="Schmidt W."/>
            <person name="Lecharny A."/>
            <person name="Aubourg S."/>
            <person name="Chefdor F."/>
            <person name="Cooke R."/>
            <person name="Berger C."/>
            <person name="Monfort A."/>
            <person name="Casacuberta E."/>
            <person name="Gibbons T."/>
            <person name="Weber N."/>
            <person name="Vandenbol M."/>
            <person name="Bargues M."/>
            <person name="Terol J."/>
            <person name="Torres A."/>
            <person name="Perez-Perez A."/>
            <person name="Purnelle B."/>
            <person name="Bent E."/>
            <person name="Johnson S."/>
            <person name="Tacon D."/>
            <person name="Jesse T."/>
            <person name="Heijnen L."/>
            <person name="Schwarz S."/>
            <person name="Scholler P."/>
            <person name="Heber S."/>
            <person name="Francs P."/>
            <person name="Bielke C."/>
            <person name="Frishman D."/>
            <person name="Haase D."/>
            <person name="Lemcke K."/>
            <person name="Mewes H.-W."/>
            <person name="Stocker S."/>
            <person name="Zaccaria P."/>
            <person name="Bevan M."/>
            <person name="Wilson R.K."/>
            <person name="de la Bastide M."/>
            <person name="Habermann K."/>
            <person name="Parnell L."/>
            <person name="Dedhia N."/>
            <person name="Gnoj L."/>
            <person name="Schutz K."/>
            <person name="Huang E."/>
            <person name="Spiegel L."/>
            <person name="Sekhon M."/>
            <person name="Murray J."/>
            <person name="Sheet P."/>
            <person name="Cordes M."/>
            <person name="Abu-Threideh J."/>
            <person name="Stoneking T."/>
            <person name="Kalicki J."/>
            <person name="Graves T."/>
            <person name="Harmon G."/>
            <person name="Edwards J."/>
            <person name="Latreille P."/>
            <person name="Courtney L."/>
            <person name="Cloud J."/>
            <person name="Abbott A."/>
            <person name="Scott K."/>
            <person name="Johnson D."/>
            <person name="Minx P."/>
            <person name="Bentley D."/>
            <person name="Fulton B."/>
            <person name="Miller N."/>
            <person name="Greco T."/>
            <person name="Kemp K."/>
            <person name="Kramer J."/>
            <person name="Fulton L."/>
            <person name="Mardis E."/>
            <person name="Dante M."/>
            <person name="Pepin K."/>
            <person name="Hillier L.W."/>
            <person name="Nelson J."/>
            <person name="Spieth J."/>
            <person name="Ryan E."/>
            <person name="Andrews S."/>
            <person name="Geisel C."/>
            <person name="Layman D."/>
            <person name="Du H."/>
            <person name="Ali J."/>
            <person name="Berghoff A."/>
            <person name="Jones K."/>
            <person name="Drone K."/>
            <person name="Cotton M."/>
            <person name="Joshu C."/>
            <person name="Antonoiu B."/>
            <person name="Zidanic M."/>
            <person name="Strong C."/>
            <person name="Sun H."/>
            <person name="Lamar B."/>
            <person name="Yordan C."/>
            <person name="Ma P."/>
            <person name="Zhong J."/>
            <person name="Preston R."/>
            <person name="Vil D."/>
            <person name="Shekher M."/>
            <person name="Matero A."/>
            <person name="Shah R."/>
            <person name="Swaby I.K."/>
            <person name="O'Shaughnessy A."/>
            <person name="Rodriguez M."/>
            <person name="Hoffman J."/>
            <person name="Till S."/>
            <person name="Granat S."/>
            <person name="Shohdy N."/>
            <person name="Hasegawa A."/>
            <person name="Hameed A."/>
            <person name="Lodhi M."/>
            <person name="Johnson A."/>
            <person name="Chen E."/>
            <person name="Marra M.A."/>
            <person name="Martienssen R."/>
            <person name="McCombie W.R."/>
        </authorList>
    </citation>
    <scope>NUCLEOTIDE SEQUENCE [LARGE SCALE GENOMIC DNA]</scope>
    <source>
        <strain>cv. Columbia</strain>
    </source>
</reference>
<reference key="2">
    <citation type="journal article" date="2017" name="Plant J.">
        <title>Araport11: a complete reannotation of the Arabidopsis thaliana reference genome.</title>
        <authorList>
            <person name="Cheng C.Y."/>
            <person name="Krishnakumar V."/>
            <person name="Chan A.P."/>
            <person name="Thibaud-Nissen F."/>
            <person name="Schobel S."/>
            <person name="Town C.D."/>
        </authorList>
    </citation>
    <scope>GENOME REANNOTATION</scope>
    <source>
        <strain>cv. Columbia</strain>
    </source>
</reference>
<reference key="3">
    <citation type="journal article" date="2008" name="Trends Plant Sci.">
        <title>The plant B3 superfamily.</title>
        <authorList>
            <person name="Swaminathan K."/>
            <person name="Peterson K."/>
            <person name="Jack T."/>
        </authorList>
    </citation>
    <scope>GENE FAMILY</scope>
</reference>
<name>REM15_ARATH</name>
<proteinExistence type="inferred from homology"/>
<gene>
    <name type="primary">REM15.15</name>
    <name type="ordered locus">At4g00260</name>
    <name type="ORF">F5I10.15</name>
</gene>
<comment type="subcellular location">
    <subcellularLocation>
        <location evidence="1">Nucleus</location>
    </subcellularLocation>
</comment>
<comment type="sequence caution" evidence="3">
    <conflict type="erroneous gene model prediction">
        <sequence resource="EMBL-CDS" id="AAB62834"/>
    </conflict>
</comment>
<comment type="sequence caution" evidence="3">
    <conflict type="erroneous gene model prediction">
        <sequence resource="EMBL-CDS" id="AAF02792"/>
    </conflict>
</comment>
<comment type="sequence caution" evidence="3">
    <conflict type="erroneous gene model prediction">
        <sequence resource="EMBL-CDS" id="CAB80784"/>
    </conflict>
</comment>
<evidence type="ECO:0000255" key="1">
    <source>
        <dbReference type="PROSITE-ProRule" id="PRU00326"/>
    </source>
</evidence>
<evidence type="ECO:0000256" key="2">
    <source>
        <dbReference type="SAM" id="MobiDB-lite"/>
    </source>
</evidence>
<evidence type="ECO:0000305" key="3"/>
<dbReference type="EMBL" id="AF013293">
    <property type="protein sequence ID" value="AAB62834.1"/>
    <property type="status" value="ALT_SEQ"/>
    <property type="molecule type" value="Genomic_DNA"/>
</dbReference>
<dbReference type="EMBL" id="AF195115">
    <property type="protein sequence ID" value="AAF02792.1"/>
    <property type="status" value="ALT_SEQ"/>
    <property type="molecule type" value="Genomic_DNA"/>
</dbReference>
<dbReference type="EMBL" id="AL161471">
    <property type="protein sequence ID" value="CAB80784.1"/>
    <property type="status" value="ALT_SEQ"/>
    <property type="molecule type" value="Genomic_DNA"/>
</dbReference>
<dbReference type="EMBL" id="CP002687">
    <property type="protein sequence ID" value="AEE81847.1"/>
    <property type="molecule type" value="Genomic_DNA"/>
</dbReference>
<dbReference type="PIR" id="T01545">
    <property type="entry name" value="T01545"/>
</dbReference>
<dbReference type="SMR" id="O23076"/>
<dbReference type="STRING" id="3702.O23076"/>
<dbReference type="iPTMnet" id="O23076"/>
<dbReference type="PaxDb" id="3702-AT4G00260.1"/>
<dbReference type="EnsemblPlants" id="AT4G00260.1">
    <property type="protein sequence ID" value="AT4G00260.1"/>
    <property type="gene ID" value="AT4G00260"/>
</dbReference>
<dbReference type="GeneID" id="828225"/>
<dbReference type="Gramene" id="AT4G00260.1">
    <property type="protein sequence ID" value="AT4G00260.1"/>
    <property type="gene ID" value="AT4G00260"/>
</dbReference>
<dbReference type="KEGG" id="ath:AT4G00260"/>
<dbReference type="Araport" id="AT4G00260"/>
<dbReference type="TAIR" id="AT4G00260">
    <property type="gene designation" value="MEE45"/>
</dbReference>
<dbReference type="eggNOG" id="ENOG502SK57">
    <property type="taxonomic scope" value="Eukaryota"/>
</dbReference>
<dbReference type="HOGENOM" id="CLU_014437_2_1_1"/>
<dbReference type="InParanoid" id="O23076"/>
<dbReference type="OMA" id="RRFCIAN"/>
<dbReference type="PhylomeDB" id="O23076"/>
<dbReference type="PRO" id="PR:O23076"/>
<dbReference type="Proteomes" id="UP000006548">
    <property type="component" value="Chromosome 4"/>
</dbReference>
<dbReference type="ExpressionAtlas" id="O23076">
    <property type="expression patterns" value="baseline and differential"/>
</dbReference>
<dbReference type="GO" id="GO:0005634">
    <property type="term" value="C:nucleus"/>
    <property type="evidence" value="ECO:0000314"/>
    <property type="project" value="TAIR"/>
</dbReference>
<dbReference type="GO" id="GO:0043565">
    <property type="term" value="F:sequence-specific DNA binding"/>
    <property type="evidence" value="ECO:0000314"/>
    <property type="project" value="TAIR"/>
</dbReference>
<dbReference type="GO" id="GO:0009793">
    <property type="term" value="P:embryo development ending in seed dormancy"/>
    <property type="evidence" value="ECO:0000315"/>
    <property type="project" value="TAIR"/>
</dbReference>
<dbReference type="GO" id="GO:0010601">
    <property type="term" value="P:positive regulation of auxin biosynthetic process"/>
    <property type="evidence" value="ECO:0000316"/>
    <property type="project" value="TAIR"/>
</dbReference>
<dbReference type="CDD" id="cd10017">
    <property type="entry name" value="B3_DNA"/>
    <property type="match status" value="4"/>
</dbReference>
<dbReference type="FunFam" id="2.40.330.10:FF:000011">
    <property type="entry name" value="Putative B3 domain-containing protein At5g66980"/>
    <property type="match status" value="1"/>
</dbReference>
<dbReference type="FunFam" id="2.40.330.10:FF:000005">
    <property type="entry name" value="Transcriptional factor B3 family protein"/>
    <property type="match status" value="2"/>
</dbReference>
<dbReference type="FunFam" id="2.40.330.10:FF:000009">
    <property type="entry name" value="Transcriptional factor B3 family protein"/>
    <property type="match status" value="1"/>
</dbReference>
<dbReference type="Gene3D" id="2.40.330.10">
    <property type="entry name" value="DNA-binding pseudobarrel domain"/>
    <property type="match status" value="4"/>
</dbReference>
<dbReference type="InterPro" id="IPR003340">
    <property type="entry name" value="B3_DNA-bd"/>
</dbReference>
<dbReference type="InterPro" id="IPR015300">
    <property type="entry name" value="DNA-bd_pseudobarrel_sf"/>
</dbReference>
<dbReference type="InterPro" id="IPR039218">
    <property type="entry name" value="REM_fam"/>
</dbReference>
<dbReference type="PANTHER" id="PTHR31674">
    <property type="entry name" value="B3 DOMAIN-CONTAINING PROTEIN REM-LIKE 3-RELATED"/>
    <property type="match status" value="1"/>
</dbReference>
<dbReference type="PANTHER" id="PTHR31674:SF66">
    <property type="entry name" value="TF-B3 DOMAIN-CONTAINING PROTEIN"/>
    <property type="match status" value="1"/>
</dbReference>
<dbReference type="Pfam" id="PF02362">
    <property type="entry name" value="B3"/>
    <property type="match status" value="4"/>
</dbReference>
<dbReference type="SMART" id="SM01019">
    <property type="entry name" value="B3"/>
    <property type="match status" value="4"/>
</dbReference>
<dbReference type="SUPFAM" id="SSF101936">
    <property type="entry name" value="DNA-binding pseudobarrel domain"/>
    <property type="match status" value="4"/>
</dbReference>
<dbReference type="PROSITE" id="PS50863">
    <property type="entry name" value="B3"/>
    <property type="match status" value="4"/>
</dbReference>
<sequence length="528" mass="60035">MAHQHFFKPLLPGFHASLTIPVAFFLKYIEGRYEQKTAKLRSDASKRTWEVKIDGQRLTDGWKEFAVSHDLRIGDIVVFRQESDLAFHVTLLGPSCCGIQYGSCSVEKNNLGDEKKKVKENPNGEAESSSRDPSCFVANVAPSSLRYDLMRFPRGFVRDNGVVGSGEIVLMNEKGRSWNFNLRQKPSNGTVYVRGGWVSFCDANGLKAGDNYTFKLIKRAGTLVLRLLPNEPKEEANEVSLPEEPESDAERNLEKIQRKEKVKKNVTREAESSSQDPSCFVANVSPSSLRYDTLYLPKRFMRENGVDKRCGEMILINEKGKSWTLDLKVKKSSGTSLIKRGWRSFCSANGLRAGSIITLKLIKKRATLVLRLIPNEPEEANEVVSLSTEQESDEESIHDEKISRRKSLLSENRFVTLTLTPYTIQSSLLNENLLCESMFQRLPVPFTRMNGINEETKMTLLDKHGVKWLTTLRFEDDKRKRLRMVGGWQGFIQANDVKANESIMLELIWEEETSCVLKFCSKVKLEIK</sequence>
<protein>
    <recommendedName>
        <fullName>Putative B3 domain-containing protein REM15</fullName>
    </recommendedName>
    <alternativeName>
        <fullName>Protein REPRODUCTIVE MERISTEM 15</fullName>
    </alternativeName>
</protein>
<organism>
    <name type="scientific">Arabidopsis thaliana</name>
    <name type="common">Mouse-ear cress</name>
    <dbReference type="NCBI Taxonomy" id="3702"/>
    <lineage>
        <taxon>Eukaryota</taxon>
        <taxon>Viridiplantae</taxon>
        <taxon>Streptophyta</taxon>
        <taxon>Embryophyta</taxon>
        <taxon>Tracheophyta</taxon>
        <taxon>Spermatophyta</taxon>
        <taxon>Magnoliopsida</taxon>
        <taxon>eudicotyledons</taxon>
        <taxon>Gunneridae</taxon>
        <taxon>Pentapetalae</taxon>
        <taxon>rosids</taxon>
        <taxon>malvids</taxon>
        <taxon>Brassicales</taxon>
        <taxon>Brassicaceae</taxon>
        <taxon>Camelineae</taxon>
        <taxon>Arabidopsis</taxon>
    </lineage>
</organism>
<accession>O23076</accession>
<feature type="chain" id="PRO_0000375109" description="Putative B3 domain-containing protein REM15">
    <location>
        <begin position="1"/>
        <end position="528"/>
    </location>
</feature>
<feature type="DNA-binding region" description="TF-B3 1" evidence="1">
    <location>
        <begin position="3"/>
        <end position="95"/>
    </location>
</feature>
<feature type="DNA-binding region" description="TF-B3 2" evidence="1">
    <location>
        <begin position="135"/>
        <end position="231"/>
    </location>
</feature>
<feature type="DNA-binding region" description="TF-B3 3" evidence="1">
    <location>
        <begin position="279"/>
        <end position="376"/>
    </location>
</feature>
<feature type="DNA-binding region" description="TF-B3 4" evidence="1">
    <location>
        <begin position="425"/>
        <end position="522"/>
    </location>
</feature>
<feature type="region of interest" description="Disordered" evidence="2">
    <location>
        <begin position="234"/>
        <end position="253"/>
    </location>
</feature>
<keyword id="KW-0238">DNA-binding</keyword>
<keyword id="KW-0539">Nucleus</keyword>
<keyword id="KW-1185">Reference proteome</keyword>
<keyword id="KW-0677">Repeat</keyword>
<keyword id="KW-0804">Transcription</keyword>
<keyword id="KW-0805">Transcription regulation</keyword>